<accession>Q1CBZ4</accession>
<protein>
    <recommendedName>
        <fullName evidence="1">GTPase Obg</fullName>
        <ecNumber evidence="1">3.6.5.-</ecNumber>
    </recommendedName>
    <alternativeName>
        <fullName evidence="1">GTP-binding protein Obg</fullName>
    </alternativeName>
</protein>
<evidence type="ECO:0000255" key="1">
    <source>
        <dbReference type="HAMAP-Rule" id="MF_01454"/>
    </source>
</evidence>
<evidence type="ECO:0000255" key="2">
    <source>
        <dbReference type="PROSITE-ProRule" id="PRU01231"/>
    </source>
</evidence>
<evidence type="ECO:0000256" key="3">
    <source>
        <dbReference type="SAM" id="MobiDB-lite"/>
    </source>
</evidence>
<organism>
    <name type="scientific">Yersinia pestis bv. Antiqua (strain Antiqua)</name>
    <dbReference type="NCBI Taxonomy" id="360102"/>
    <lineage>
        <taxon>Bacteria</taxon>
        <taxon>Pseudomonadati</taxon>
        <taxon>Pseudomonadota</taxon>
        <taxon>Gammaproteobacteria</taxon>
        <taxon>Enterobacterales</taxon>
        <taxon>Yersiniaceae</taxon>
        <taxon>Yersinia</taxon>
    </lineage>
</organism>
<reference key="1">
    <citation type="journal article" date="2006" name="J. Bacteriol.">
        <title>Complete genome sequence of Yersinia pestis strains Antiqua and Nepal516: evidence of gene reduction in an emerging pathogen.</title>
        <authorList>
            <person name="Chain P.S.G."/>
            <person name="Hu P."/>
            <person name="Malfatti S.A."/>
            <person name="Radnedge L."/>
            <person name="Larimer F."/>
            <person name="Vergez L.M."/>
            <person name="Worsham P."/>
            <person name="Chu M.C."/>
            <person name="Andersen G.L."/>
        </authorList>
    </citation>
    <scope>NUCLEOTIDE SEQUENCE [LARGE SCALE GENOMIC DNA]</scope>
    <source>
        <strain>Antiqua</strain>
    </source>
</reference>
<sequence length="390" mass="43148">MKFVDEAAILVVAGDGGNGCVSFRREKYIPNGGPDGGDGGDGGDIYLLADENLNTLIDYRFVKSFRAERGQNGQSRDCTGKRGKDITIKVPVGTRVLDQGTGEIVGDMVRHGQRLMVAKGGFHGLGNSRFKSSVNRAPRQKTMGTEGETRELMLELLLLADVGMLGLPNAGKSTFIRAVSAAKPKVADYPFTTLIPSLGVVRMDYEQSFVIADIPGLIEGASDGAGLGIRFLKHLERCRVLLHLVDLAPIDESDPAENAKVIVNELQQYSENLAEKPRWLVFNKIDLIDPEEAEKRAKAIVETLGWEGKYYMISAANRDNVNALCWDVMSFLNSQPKAMAIAESVPEKVEFMWDDYHREQLAEVEAEAEDDWDDDWDEEDDDGVEIIYER</sequence>
<gene>
    <name evidence="1" type="primary">obg</name>
    <name type="ordered locus">YPA_0059</name>
</gene>
<keyword id="KW-0963">Cytoplasm</keyword>
<keyword id="KW-0342">GTP-binding</keyword>
<keyword id="KW-0378">Hydrolase</keyword>
<keyword id="KW-0460">Magnesium</keyword>
<keyword id="KW-0479">Metal-binding</keyword>
<keyword id="KW-0547">Nucleotide-binding</keyword>
<comment type="function">
    <text evidence="1">An essential GTPase which binds GTP, GDP and possibly (p)ppGpp with moderate affinity, with high nucleotide exchange rates and a fairly low GTP hydrolysis rate. Plays a role in control of the cell cycle, stress response, ribosome biogenesis and in those bacteria that undergo differentiation, in morphogenesis control.</text>
</comment>
<comment type="cofactor">
    <cofactor evidence="1">
        <name>Mg(2+)</name>
        <dbReference type="ChEBI" id="CHEBI:18420"/>
    </cofactor>
</comment>
<comment type="subunit">
    <text evidence="1">Monomer.</text>
</comment>
<comment type="subcellular location">
    <subcellularLocation>
        <location evidence="1">Cytoplasm</location>
    </subcellularLocation>
</comment>
<comment type="similarity">
    <text evidence="1">Belongs to the TRAFAC class OBG-HflX-like GTPase superfamily. OBG GTPase family.</text>
</comment>
<name>OBG_YERPA</name>
<dbReference type="EC" id="3.6.5.-" evidence="1"/>
<dbReference type="EMBL" id="CP000308">
    <property type="protein sequence ID" value="ABG12028.1"/>
    <property type="molecule type" value="Genomic_DNA"/>
</dbReference>
<dbReference type="SMR" id="Q1CBZ4"/>
<dbReference type="KEGG" id="ypa:YPA_0059"/>
<dbReference type="Proteomes" id="UP000001971">
    <property type="component" value="Chromosome"/>
</dbReference>
<dbReference type="GO" id="GO:0005737">
    <property type="term" value="C:cytoplasm"/>
    <property type="evidence" value="ECO:0007669"/>
    <property type="project" value="UniProtKB-SubCell"/>
</dbReference>
<dbReference type="GO" id="GO:0005525">
    <property type="term" value="F:GTP binding"/>
    <property type="evidence" value="ECO:0007669"/>
    <property type="project" value="UniProtKB-UniRule"/>
</dbReference>
<dbReference type="GO" id="GO:0003924">
    <property type="term" value="F:GTPase activity"/>
    <property type="evidence" value="ECO:0007669"/>
    <property type="project" value="UniProtKB-UniRule"/>
</dbReference>
<dbReference type="GO" id="GO:0000287">
    <property type="term" value="F:magnesium ion binding"/>
    <property type="evidence" value="ECO:0007669"/>
    <property type="project" value="InterPro"/>
</dbReference>
<dbReference type="GO" id="GO:0042254">
    <property type="term" value="P:ribosome biogenesis"/>
    <property type="evidence" value="ECO:0007669"/>
    <property type="project" value="UniProtKB-UniRule"/>
</dbReference>
<dbReference type="CDD" id="cd01898">
    <property type="entry name" value="Obg"/>
    <property type="match status" value="1"/>
</dbReference>
<dbReference type="FunFam" id="2.70.210.12:FF:000001">
    <property type="entry name" value="GTPase Obg"/>
    <property type="match status" value="1"/>
</dbReference>
<dbReference type="FunFam" id="3.40.50.300:FF:000185">
    <property type="entry name" value="GTPase Obg"/>
    <property type="match status" value="1"/>
</dbReference>
<dbReference type="Gene3D" id="2.70.210.12">
    <property type="entry name" value="GTP1/OBG domain"/>
    <property type="match status" value="1"/>
</dbReference>
<dbReference type="Gene3D" id="3.40.50.300">
    <property type="entry name" value="P-loop containing nucleotide triphosphate hydrolases"/>
    <property type="match status" value="1"/>
</dbReference>
<dbReference type="HAMAP" id="MF_01454">
    <property type="entry name" value="GTPase_Obg"/>
    <property type="match status" value="1"/>
</dbReference>
<dbReference type="InterPro" id="IPR031167">
    <property type="entry name" value="G_OBG"/>
</dbReference>
<dbReference type="InterPro" id="IPR006073">
    <property type="entry name" value="GTP-bd"/>
</dbReference>
<dbReference type="InterPro" id="IPR014100">
    <property type="entry name" value="GTP-bd_Obg/CgtA"/>
</dbReference>
<dbReference type="InterPro" id="IPR006074">
    <property type="entry name" value="GTP1-OBG_CS"/>
</dbReference>
<dbReference type="InterPro" id="IPR006169">
    <property type="entry name" value="GTP1_OBG_dom"/>
</dbReference>
<dbReference type="InterPro" id="IPR036726">
    <property type="entry name" value="GTP1_OBG_dom_sf"/>
</dbReference>
<dbReference type="InterPro" id="IPR045086">
    <property type="entry name" value="OBG_GTPase"/>
</dbReference>
<dbReference type="InterPro" id="IPR027417">
    <property type="entry name" value="P-loop_NTPase"/>
</dbReference>
<dbReference type="NCBIfam" id="TIGR02729">
    <property type="entry name" value="Obg_CgtA"/>
    <property type="match status" value="1"/>
</dbReference>
<dbReference type="NCBIfam" id="NF008955">
    <property type="entry name" value="PRK12297.1"/>
    <property type="match status" value="1"/>
</dbReference>
<dbReference type="NCBIfam" id="NF008956">
    <property type="entry name" value="PRK12299.1"/>
    <property type="match status" value="1"/>
</dbReference>
<dbReference type="PANTHER" id="PTHR11702">
    <property type="entry name" value="DEVELOPMENTALLY REGULATED GTP-BINDING PROTEIN-RELATED"/>
    <property type="match status" value="1"/>
</dbReference>
<dbReference type="PANTHER" id="PTHR11702:SF31">
    <property type="entry name" value="MITOCHONDRIAL RIBOSOME-ASSOCIATED GTPASE 2"/>
    <property type="match status" value="1"/>
</dbReference>
<dbReference type="Pfam" id="PF01018">
    <property type="entry name" value="GTP1_OBG"/>
    <property type="match status" value="1"/>
</dbReference>
<dbReference type="Pfam" id="PF01926">
    <property type="entry name" value="MMR_HSR1"/>
    <property type="match status" value="1"/>
</dbReference>
<dbReference type="PIRSF" id="PIRSF002401">
    <property type="entry name" value="GTP_bd_Obg/CgtA"/>
    <property type="match status" value="1"/>
</dbReference>
<dbReference type="PRINTS" id="PR00326">
    <property type="entry name" value="GTP1OBG"/>
</dbReference>
<dbReference type="SUPFAM" id="SSF82051">
    <property type="entry name" value="Obg GTP-binding protein N-terminal domain"/>
    <property type="match status" value="1"/>
</dbReference>
<dbReference type="SUPFAM" id="SSF52540">
    <property type="entry name" value="P-loop containing nucleoside triphosphate hydrolases"/>
    <property type="match status" value="1"/>
</dbReference>
<dbReference type="PROSITE" id="PS51710">
    <property type="entry name" value="G_OBG"/>
    <property type="match status" value="1"/>
</dbReference>
<dbReference type="PROSITE" id="PS00905">
    <property type="entry name" value="GTP1_OBG"/>
    <property type="match status" value="1"/>
</dbReference>
<dbReference type="PROSITE" id="PS51883">
    <property type="entry name" value="OBG"/>
    <property type="match status" value="1"/>
</dbReference>
<proteinExistence type="inferred from homology"/>
<feature type="chain" id="PRO_0000386409" description="GTPase Obg">
    <location>
        <begin position="1"/>
        <end position="390"/>
    </location>
</feature>
<feature type="domain" description="Obg" evidence="2">
    <location>
        <begin position="1"/>
        <end position="159"/>
    </location>
</feature>
<feature type="domain" description="OBG-type G" evidence="1">
    <location>
        <begin position="160"/>
        <end position="333"/>
    </location>
</feature>
<feature type="region of interest" description="Disordered" evidence="3">
    <location>
        <begin position="364"/>
        <end position="390"/>
    </location>
</feature>
<feature type="compositionally biased region" description="Acidic residues" evidence="3">
    <location>
        <begin position="364"/>
        <end position="384"/>
    </location>
</feature>
<feature type="binding site" evidence="1">
    <location>
        <begin position="166"/>
        <end position="173"/>
    </location>
    <ligand>
        <name>GTP</name>
        <dbReference type="ChEBI" id="CHEBI:37565"/>
    </ligand>
</feature>
<feature type="binding site" evidence="1">
    <location>
        <position position="173"/>
    </location>
    <ligand>
        <name>Mg(2+)</name>
        <dbReference type="ChEBI" id="CHEBI:18420"/>
    </ligand>
</feature>
<feature type="binding site" evidence="1">
    <location>
        <begin position="191"/>
        <end position="195"/>
    </location>
    <ligand>
        <name>GTP</name>
        <dbReference type="ChEBI" id="CHEBI:37565"/>
    </ligand>
</feature>
<feature type="binding site" evidence="1">
    <location>
        <position position="193"/>
    </location>
    <ligand>
        <name>Mg(2+)</name>
        <dbReference type="ChEBI" id="CHEBI:18420"/>
    </ligand>
</feature>
<feature type="binding site" evidence="1">
    <location>
        <begin position="213"/>
        <end position="216"/>
    </location>
    <ligand>
        <name>GTP</name>
        <dbReference type="ChEBI" id="CHEBI:37565"/>
    </ligand>
</feature>
<feature type="binding site" evidence="1">
    <location>
        <begin position="283"/>
        <end position="286"/>
    </location>
    <ligand>
        <name>GTP</name>
        <dbReference type="ChEBI" id="CHEBI:37565"/>
    </ligand>
</feature>
<feature type="binding site" evidence="1">
    <location>
        <begin position="314"/>
        <end position="316"/>
    </location>
    <ligand>
        <name>GTP</name>
        <dbReference type="ChEBI" id="CHEBI:37565"/>
    </ligand>
</feature>